<comment type="function">
    <text evidence="1">Involved in the biosynthesis of isopentenyl diphosphate (IPP) and dimethylallyl diphosphate (DMAPP), two major building blocks of isoprenoid compounds. Catalyzes the conversion of 4-diphosphocytidyl-2-C-methyl-D-erythritol 2-phosphate (CDP-ME2P) to 2-C-methyl-D-erythritol 2,4-cyclodiphosphate (ME-CPP) with a corresponding release of cytidine 5-monophosphate (CMP).</text>
</comment>
<comment type="catalytic activity">
    <reaction evidence="1">
        <text>4-CDP-2-C-methyl-D-erythritol 2-phosphate = 2-C-methyl-D-erythritol 2,4-cyclic diphosphate + CMP</text>
        <dbReference type="Rhea" id="RHEA:23864"/>
        <dbReference type="ChEBI" id="CHEBI:57919"/>
        <dbReference type="ChEBI" id="CHEBI:58483"/>
        <dbReference type="ChEBI" id="CHEBI:60377"/>
        <dbReference type="EC" id="4.6.1.12"/>
    </reaction>
</comment>
<comment type="cofactor">
    <cofactor evidence="1">
        <name>a divalent metal cation</name>
        <dbReference type="ChEBI" id="CHEBI:60240"/>
    </cofactor>
    <text evidence="1">Binds 1 divalent metal cation per subunit.</text>
</comment>
<comment type="pathway">
    <text evidence="1">Isoprenoid biosynthesis; isopentenyl diphosphate biosynthesis via DXP pathway; isopentenyl diphosphate from 1-deoxy-D-xylulose 5-phosphate: step 4/6.</text>
</comment>
<comment type="subunit">
    <text evidence="1">Homotrimer.</text>
</comment>
<comment type="similarity">
    <text evidence="1">Belongs to the IspF family.</text>
</comment>
<reference key="1">
    <citation type="journal article" date="2011" name="J. Bacteriol.">
        <title>Complete genome sequence of the plant growth-promoting endophyte Burkholderia phytofirmans strain PsJN.</title>
        <authorList>
            <person name="Weilharter A."/>
            <person name="Mitter B."/>
            <person name="Shin M.V."/>
            <person name="Chain P.S."/>
            <person name="Nowak J."/>
            <person name="Sessitsch A."/>
        </authorList>
    </citation>
    <scope>NUCLEOTIDE SEQUENCE [LARGE SCALE GENOMIC DNA]</scope>
    <source>
        <strain>DSM 17436 / LMG 22146 / PsJN</strain>
    </source>
</reference>
<protein>
    <recommendedName>
        <fullName evidence="1">2-C-methyl-D-erythritol 2,4-cyclodiphosphate synthase</fullName>
        <shortName evidence="1">MECDP-synthase</shortName>
        <shortName evidence="1">MECPP-synthase</shortName>
        <shortName evidence="1">MECPS</shortName>
        <ecNumber evidence="1">4.6.1.12</ecNumber>
    </recommendedName>
</protein>
<dbReference type="EC" id="4.6.1.12" evidence="1"/>
<dbReference type="EMBL" id="CP001052">
    <property type="protein sequence ID" value="ACD16284.1"/>
    <property type="molecule type" value="Genomic_DNA"/>
</dbReference>
<dbReference type="RefSeq" id="WP_012432887.1">
    <property type="nucleotide sequence ID" value="NC_010681.1"/>
</dbReference>
<dbReference type="SMR" id="B2T3X3"/>
<dbReference type="STRING" id="398527.Bphyt_1876"/>
<dbReference type="GeneID" id="97305330"/>
<dbReference type="KEGG" id="bpy:Bphyt_1876"/>
<dbReference type="eggNOG" id="COG0245">
    <property type="taxonomic scope" value="Bacteria"/>
</dbReference>
<dbReference type="HOGENOM" id="CLU_084630_2_0_4"/>
<dbReference type="OrthoDB" id="9804336at2"/>
<dbReference type="UniPathway" id="UPA00056">
    <property type="reaction ID" value="UER00095"/>
</dbReference>
<dbReference type="Proteomes" id="UP000001739">
    <property type="component" value="Chromosome 1"/>
</dbReference>
<dbReference type="GO" id="GO:0008685">
    <property type="term" value="F:2-C-methyl-D-erythritol 2,4-cyclodiphosphate synthase activity"/>
    <property type="evidence" value="ECO:0007669"/>
    <property type="project" value="UniProtKB-UniRule"/>
</dbReference>
<dbReference type="GO" id="GO:0046872">
    <property type="term" value="F:metal ion binding"/>
    <property type="evidence" value="ECO:0007669"/>
    <property type="project" value="UniProtKB-KW"/>
</dbReference>
<dbReference type="GO" id="GO:0019288">
    <property type="term" value="P:isopentenyl diphosphate biosynthetic process, methylerythritol 4-phosphate pathway"/>
    <property type="evidence" value="ECO:0007669"/>
    <property type="project" value="UniProtKB-UniRule"/>
</dbReference>
<dbReference type="GO" id="GO:0016114">
    <property type="term" value="P:terpenoid biosynthetic process"/>
    <property type="evidence" value="ECO:0007669"/>
    <property type="project" value="InterPro"/>
</dbReference>
<dbReference type="CDD" id="cd00554">
    <property type="entry name" value="MECDP_synthase"/>
    <property type="match status" value="1"/>
</dbReference>
<dbReference type="FunFam" id="3.30.1330.50:FF:000001">
    <property type="entry name" value="2-C-methyl-D-erythritol 2,4-cyclodiphosphate synthase"/>
    <property type="match status" value="1"/>
</dbReference>
<dbReference type="Gene3D" id="3.30.1330.50">
    <property type="entry name" value="2-C-methyl-D-erythritol 2,4-cyclodiphosphate synthase"/>
    <property type="match status" value="1"/>
</dbReference>
<dbReference type="HAMAP" id="MF_00107">
    <property type="entry name" value="IspF"/>
    <property type="match status" value="1"/>
</dbReference>
<dbReference type="InterPro" id="IPR003526">
    <property type="entry name" value="MECDP_synthase"/>
</dbReference>
<dbReference type="InterPro" id="IPR020555">
    <property type="entry name" value="MECDP_synthase_CS"/>
</dbReference>
<dbReference type="InterPro" id="IPR036571">
    <property type="entry name" value="MECDP_synthase_sf"/>
</dbReference>
<dbReference type="NCBIfam" id="TIGR00151">
    <property type="entry name" value="ispF"/>
    <property type="match status" value="1"/>
</dbReference>
<dbReference type="PANTHER" id="PTHR43181">
    <property type="entry name" value="2-C-METHYL-D-ERYTHRITOL 2,4-CYCLODIPHOSPHATE SYNTHASE, CHLOROPLASTIC"/>
    <property type="match status" value="1"/>
</dbReference>
<dbReference type="PANTHER" id="PTHR43181:SF1">
    <property type="entry name" value="2-C-METHYL-D-ERYTHRITOL 2,4-CYCLODIPHOSPHATE SYNTHASE, CHLOROPLASTIC"/>
    <property type="match status" value="1"/>
</dbReference>
<dbReference type="Pfam" id="PF02542">
    <property type="entry name" value="YgbB"/>
    <property type="match status" value="1"/>
</dbReference>
<dbReference type="SUPFAM" id="SSF69765">
    <property type="entry name" value="IpsF-like"/>
    <property type="match status" value="1"/>
</dbReference>
<dbReference type="PROSITE" id="PS01350">
    <property type="entry name" value="ISPF"/>
    <property type="match status" value="1"/>
</dbReference>
<name>ISPF_PARPJ</name>
<feature type="chain" id="PRO_1000094246" description="2-C-methyl-D-erythritol 2,4-cyclodiphosphate synthase">
    <location>
        <begin position="1"/>
        <end position="159"/>
    </location>
</feature>
<feature type="binding site" evidence="1">
    <location>
        <begin position="10"/>
        <end position="12"/>
    </location>
    <ligand>
        <name>4-CDP-2-C-methyl-D-erythritol 2-phosphate</name>
        <dbReference type="ChEBI" id="CHEBI:57919"/>
    </ligand>
</feature>
<feature type="binding site" evidence="1">
    <location>
        <position position="10"/>
    </location>
    <ligand>
        <name>a divalent metal cation</name>
        <dbReference type="ChEBI" id="CHEBI:60240"/>
    </ligand>
</feature>
<feature type="binding site" evidence="1">
    <location>
        <position position="12"/>
    </location>
    <ligand>
        <name>a divalent metal cation</name>
        <dbReference type="ChEBI" id="CHEBI:60240"/>
    </ligand>
</feature>
<feature type="binding site" evidence="1">
    <location>
        <begin position="36"/>
        <end position="37"/>
    </location>
    <ligand>
        <name>4-CDP-2-C-methyl-D-erythritol 2-phosphate</name>
        <dbReference type="ChEBI" id="CHEBI:57919"/>
    </ligand>
</feature>
<feature type="binding site" evidence="1">
    <location>
        <position position="44"/>
    </location>
    <ligand>
        <name>a divalent metal cation</name>
        <dbReference type="ChEBI" id="CHEBI:60240"/>
    </ligand>
</feature>
<feature type="binding site" evidence="1">
    <location>
        <begin position="58"/>
        <end position="60"/>
    </location>
    <ligand>
        <name>4-CDP-2-C-methyl-D-erythritol 2-phosphate</name>
        <dbReference type="ChEBI" id="CHEBI:57919"/>
    </ligand>
</feature>
<feature type="binding site" evidence="1">
    <location>
        <begin position="63"/>
        <end position="67"/>
    </location>
    <ligand>
        <name>4-CDP-2-C-methyl-D-erythritol 2-phosphate</name>
        <dbReference type="ChEBI" id="CHEBI:57919"/>
    </ligand>
</feature>
<feature type="binding site" evidence="1">
    <location>
        <position position="144"/>
    </location>
    <ligand>
        <name>4-CDP-2-C-methyl-D-erythritol 2-phosphate</name>
        <dbReference type="ChEBI" id="CHEBI:57919"/>
    </ligand>
</feature>
<feature type="site" description="Transition state stabilizer" evidence="1">
    <location>
        <position position="36"/>
    </location>
</feature>
<feature type="site" description="Transition state stabilizer" evidence="1">
    <location>
        <position position="135"/>
    </location>
</feature>
<proteinExistence type="inferred from homology"/>
<sequence length="159" mass="16743">MDFRIGQGYDVHALVPGRPLIIGGVTIPYERGLLGHSDADVLLHAITDAIFGAAAMGDIGRHFSDTDAKFAGADSRVLLRECFARVKAAGFSIANVDSSVVAQAPKLAPHIEGMRANIAADLGLPVERVNVKAKTNEKLGYLGRGEGIEAQAAVLLIKN</sequence>
<organism>
    <name type="scientific">Paraburkholderia phytofirmans (strain DSM 17436 / LMG 22146 / PsJN)</name>
    <name type="common">Burkholderia phytofirmans</name>
    <dbReference type="NCBI Taxonomy" id="398527"/>
    <lineage>
        <taxon>Bacteria</taxon>
        <taxon>Pseudomonadati</taxon>
        <taxon>Pseudomonadota</taxon>
        <taxon>Betaproteobacteria</taxon>
        <taxon>Burkholderiales</taxon>
        <taxon>Burkholderiaceae</taxon>
        <taxon>Paraburkholderia</taxon>
    </lineage>
</organism>
<gene>
    <name evidence="1" type="primary">ispF</name>
    <name type="ordered locus">Bphyt_1876</name>
</gene>
<evidence type="ECO:0000255" key="1">
    <source>
        <dbReference type="HAMAP-Rule" id="MF_00107"/>
    </source>
</evidence>
<accession>B2T3X3</accession>
<keyword id="KW-0414">Isoprene biosynthesis</keyword>
<keyword id="KW-0456">Lyase</keyword>
<keyword id="KW-0479">Metal-binding</keyword>